<comment type="function">
    <text evidence="2">Alpha-conotoxins act on postsynaptic membranes, they bind to the nicotinic acetylcholine receptors (nAChR) and thus inhibit them (PubMed:31255696). This toxin potently and selectively inhibits human and rat alpha-6-beta-4/CHRNA6-CHRNB4 nAChR (IC(50)=12 nM on rat nAChR) (PubMed:31255696). It exhibits rapid binding and unbinding at this receptor (PubMed:31255696). It also shows activity on rat alpha-6-beta-4/CHRNA6-CHRNB4 (IC(50)=12 nM), human alpha-6/alpha-3-beta-4 (CHRNA6/CHRNA3-CHRNB4) (IC(50)=5.3 nM), rat alpha-6/alpha-3-beta-4 (CHRNA6/CHRNA3-CHRNB4) (IC(50)=18 nM), rat alpha-3-beta-4/CHRNA3-CHRNB4 (IC(50)=320 nM), and rat alpha-6/alpha-3-beta-2-beta-3 (CHRNA6/CHRNA3-CHRNB2-CHRNB3) (IC(50)=4 uM) (PubMed:31255696).</text>
</comment>
<comment type="subcellular location">
    <subcellularLocation>
        <location evidence="5">Secreted</location>
    </subcellularLocation>
</comment>
<comment type="tissue specificity">
    <text evidence="5">Expressed by the venom duct.</text>
</comment>
<comment type="domain">
    <text evidence="4">The cysteine framework is I (CC-C-C). Alpha4/6 pattern.</text>
</comment>
<comment type="miscellaneous">
    <text evidence="2">Negative results: has no effect on human alpha-1-beta-1-delta-epsilon/CHRNA1-CHRNB1-CHRNE-CHRND, rat alpha-2-beta-2/CHRNA2-CHRNB2, rat alpha-2 beta-4/CHRNA2-CHRNB4, rat alpha-3 beta-2/CHRNA3-CHRNB2, rat alpha-4 beta-2/CHRNA4-CHRNB2, rat alpha-4 beta-4/CHRNA4-CHRNB4, rat alpha-7/CHRNA7, rat alpha-9-alpha-10/CHRNA9-CHRNA10, human alpha-3-beta-4/CHRNA3-CHRNB4, human alpha-6/alpha-3-beta-2-beta-3 (CHRNA6/CHRNA3, CHRNB2 and CHRNB3), human alpha-4-beta-2/CHRNA4-CHRNB2.</text>
</comment>
<comment type="similarity">
    <text evidence="4">Belongs to the conotoxin A superfamily.</text>
</comment>
<comment type="sequence caution" evidence="4">
    <conflict type="erroneous initiation">
        <sequence resource="EMBL-CDS" id="QCT05780"/>
    </conflict>
    <text>Extended N-terminus.</text>
</comment>
<name>CA1B_CONVE</name>
<proteinExistence type="evidence at protein level"/>
<feature type="propeptide" id="PRO_0000453394" evidence="5">
    <location>
        <begin position="1" status="less than"/>
        <end position="22"/>
    </location>
</feature>
<feature type="peptide" id="PRO_0000453395" description="Alpha-conotoxin VnIB" evidence="5">
    <location>
        <begin position="23"/>
        <end position="39"/>
    </location>
</feature>
<feature type="modified residue" description="Glycine amide" evidence="1 5">
    <location>
        <position position="39"/>
    </location>
</feature>
<feature type="disulfide bond" evidence="5">
    <location>
        <begin position="25"/>
        <end position="31"/>
    </location>
</feature>
<feature type="disulfide bond" evidence="5">
    <location>
        <begin position="26"/>
        <end position="38"/>
    </location>
</feature>
<feature type="non-terminal residue" evidence="5">
    <location>
        <position position="1"/>
    </location>
</feature>
<sequence length="42" mass="4306">ASDGRNAAADDKASDPIALTVRGGCCSHPVCYTKNPNCGGRR</sequence>
<organism>
    <name type="scientific">Conus ventricosus</name>
    <name type="common">Mediterranean cone</name>
    <dbReference type="NCBI Taxonomy" id="117992"/>
    <lineage>
        <taxon>Eukaryota</taxon>
        <taxon>Metazoa</taxon>
        <taxon>Spiralia</taxon>
        <taxon>Lophotrochozoa</taxon>
        <taxon>Mollusca</taxon>
        <taxon>Gastropoda</taxon>
        <taxon>Caenogastropoda</taxon>
        <taxon>Neogastropoda</taxon>
        <taxon>Conoidea</taxon>
        <taxon>Conidae</taxon>
        <taxon>Conus</taxon>
        <taxon>Lautoconus</taxon>
    </lineage>
</organism>
<keyword id="KW-0008">Acetylcholine receptor inhibiting toxin</keyword>
<keyword id="KW-0027">Amidation</keyword>
<keyword id="KW-1015">Disulfide bond</keyword>
<keyword id="KW-0528">Neurotoxin</keyword>
<keyword id="KW-0629">Postsynaptic neurotoxin</keyword>
<keyword id="KW-0964">Secreted</keyword>
<keyword id="KW-0800">Toxin</keyword>
<dbReference type="EMBL" id="MK120500">
    <property type="protein sequence ID" value="QCT05780.1"/>
    <property type="status" value="ALT_INIT"/>
    <property type="molecule type" value="Genomic_DNA"/>
</dbReference>
<dbReference type="GO" id="GO:0005576">
    <property type="term" value="C:extracellular region"/>
    <property type="evidence" value="ECO:0007669"/>
    <property type="project" value="UniProtKB-SubCell"/>
</dbReference>
<dbReference type="GO" id="GO:0035792">
    <property type="term" value="C:host cell postsynaptic membrane"/>
    <property type="evidence" value="ECO:0007669"/>
    <property type="project" value="UniProtKB-KW"/>
</dbReference>
<dbReference type="GO" id="GO:0030550">
    <property type="term" value="F:acetylcholine receptor inhibitor activity"/>
    <property type="evidence" value="ECO:0007669"/>
    <property type="project" value="UniProtKB-KW"/>
</dbReference>
<dbReference type="GO" id="GO:0090729">
    <property type="term" value="F:toxin activity"/>
    <property type="evidence" value="ECO:0007669"/>
    <property type="project" value="UniProtKB-KW"/>
</dbReference>
<dbReference type="InterPro" id="IPR009958">
    <property type="entry name" value="Conotoxin_a-typ"/>
</dbReference>
<dbReference type="Pfam" id="PF07365">
    <property type="entry name" value="Toxin_8"/>
    <property type="match status" value="1"/>
</dbReference>
<protein>
    <recommendedName>
        <fullName evidence="3">Alpha-conotoxin VnIB</fullName>
    </recommendedName>
</protein>
<accession>A0A4P8XV20</accession>
<reference key="1">
    <citation type="journal article" date="2019" name="Neuropharmacology">
        <title>Alpha-conotoxin VnIB from Conus ventricosus is a potent and selective antagonist of alpha6beta4* nicotinic acetylcholine receptors.</title>
        <authorList>
            <person name="van Hout M."/>
            <person name="Valdes A."/>
            <person name="Christensen S.B."/>
            <person name="Tran P.T."/>
            <person name="Watkins M."/>
            <person name="Gajewiak J."/>
            <person name="Jensen A.A."/>
            <person name="Olivera B.M."/>
            <person name="McIntosh J.M."/>
        </authorList>
    </citation>
    <scope>NUCLEOTIDE SEQUENCE [GENOMIC DNA]</scope>
    <scope>SYNTHESIS OF 23-39</scope>
    <scope>AMIDATION AT GLY-39</scope>
    <scope>DISULFIDE BOND</scope>
</reference>
<evidence type="ECO:0000250" key="1">
    <source>
        <dbReference type="UniProtKB" id="P85886"/>
    </source>
</evidence>
<evidence type="ECO:0000269" key="2">
    <source>
    </source>
</evidence>
<evidence type="ECO:0000303" key="3">
    <source>
    </source>
</evidence>
<evidence type="ECO:0000305" key="4"/>
<evidence type="ECO:0000305" key="5">
    <source>
    </source>
</evidence>